<name>DNLJ_MARN8</name>
<feature type="chain" id="PRO_0000313303" description="DNA ligase">
    <location>
        <begin position="1"/>
        <end position="678"/>
    </location>
</feature>
<feature type="domain" description="BRCT" evidence="1">
    <location>
        <begin position="595"/>
        <end position="678"/>
    </location>
</feature>
<feature type="active site" description="N6-AMP-lysine intermediate" evidence="1">
    <location>
        <position position="119"/>
    </location>
</feature>
<feature type="binding site" evidence="1">
    <location>
        <begin position="36"/>
        <end position="40"/>
    </location>
    <ligand>
        <name>NAD(+)</name>
        <dbReference type="ChEBI" id="CHEBI:57540"/>
    </ligand>
</feature>
<feature type="binding site" evidence="1">
    <location>
        <begin position="85"/>
        <end position="86"/>
    </location>
    <ligand>
        <name>NAD(+)</name>
        <dbReference type="ChEBI" id="CHEBI:57540"/>
    </ligand>
</feature>
<feature type="binding site" evidence="1">
    <location>
        <position position="117"/>
    </location>
    <ligand>
        <name>NAD(+)</name>
        <dbReference type="ChEBI" id="CHEBI:57540"/>
    </ligand>
</feature>
<feature type="binding site" evidence="1">
    <location>
        <position position="140"/>
    </location>
    <ligand>
        <name>NAD(+)</name>
        <dbReference type="ChEBI" id="CHEBI:57540"/>
    </ligand>
</feature>
<feature type="binding site" evidence="1">
    <location>
        <position position="177"/>
    </location>
    <ligand>
        <name>NAD(+)</name>
        <dbReference type="ChEBI" id="CHEBI:57540"/>
    </ligand>
</feature>
<feature type="binding site" evidence="1">
    <location>
        <position position="294"/>
    </location>
    <ligand>
        <name>NAD(+)</name>
        <dbReference type="ChEBI" id="CHEBI:57540"/>
    </ligand>
</feature>
<feature type="binding site" evidence="1">
    <location>
        <position position="318"/>
    </location>
    <ligand>
        <name>NAD(+)</name>
        <dbReference type="ChEBI" id="CHEBI:57540"/>
    </ligand>
</feature>
<feature type="binding site" evidence="1">
    <location>
        <position position="412"/>
    </location>
    <ligand>
        <name>Zn(2+)</name>
        <dbReference type="ChEBI" id="CHEBI:29105"/>
    </ligand>
</feature>
<feature type="binding site" evidence="1">
    <location>
        <position position="415"/>
    </location>
    <ligand>
        <name>Zn(2+)</name>
        <dbReference type="ChEBI" id="CHEBI:29105"/>
    </ligand>
</feature>
<feature type="binding site" evidence="1">
    <location>
        <position position="430"/>
    </location>
    <ligand>
        <name>Zn(2+)</name>
        <dbReference type="ChEBI" id="CHEBI:29105"/>
    </ligand>
</feature>
<feature type="binding site" evidence="1">
    <location>
        <position position="436"/>
    </location>
    <ligand>
        <name>Zn(2+)</name>
        <dbReference type="ChEBI" id="CHEBI:29105"/>
    </ligand>
</feature>
<sequence>MTNVPETIRKRVDSLRATLEDHNYYYYVQDDPRIPDAEYDRLFRELQKLEAEHPELATEDSPTRRVGSSAETSFEEVIHRLPMLSLDNAFSEDELRDFDRRVRDRLGADGAIEYVCEPKLDGLAVSLHYENGTLTRAATRGDGYTGEDITANIRTIPSVPLKLRGSGYPDLVEVRGEVYMPRAGFEKLNERLAEQGEKTFVNPRNAAAGSLRQKKSTVTARRPLELCAYSMAVTDESVLPETHWDSLQLVRDWGFRINPEMRKAEGVEACLDAYNELMAKRDSLPYEIDGIVFKVNRLDLQQELGFVSRAPRWAIAHKFPAQEELTIIEDVEFQVGRTGAVTPVARLKPVFVGGVTVSNATLHNMDEIRRLDVHIGDTVFIRRAGDVIPQVVKVVPEKRPAEAPMVEMPEHCPVCGSDIVQIEGEAVARCSGGLYCPAQRKEAIRHYASRKAMDIEGLGDRLIEVLVDEGMVSTVADLYRLTKFQIASLERMGDKSAANLIAAIDRSREPVLWRFLYALGIREVGEATAKGLAAHFGTLEAISAADEETLQTVPDVGPIVAGHIRSFFDQPHNQETLAALKEAGVTWQEEQVLSADEQPLNGQTWVLTGTLSGMTRDQAKEKLEQLGAKVAGSVSKKTACVVAGEAAGSKLAKAEQLGVPVLDEEGLANLLREHGIEV</sequence>
<evidence type="ECO:0000255" key="1">
    <source>
        <dbReference type="HAMAP-Rule" id="MF_01588"/>
    </source>
</evidence>
<gene>
    <name evidence="1" type="primary">ligA</name>
    <name type="ordered locus">Maqu_1167</name>
</gene>
<organism>
    <name type="scientific">Marinobacter nauticus (strain ATCC 700491 / DSM 11845 / VT8)</name>
    <name type="common">Marinobacter aquaeolei</name>
    <dbReference type="NCBI Taxonomy" id="351348"/>
    <lineage>
        <taxon>Bacteria</taxon>
        <taxon>Pseudomonadati</taxon>
        <taxon>Pseudomonadota</taxon>
        <taxon>Gammaproteobacteria</taxon>
        <taxon>Pseudomonadales</taxon>
        <taxon>Marinobacteraceae</taxon>
        <taxon>Marinobacter</taxon>
    </lineage>
</organism>
<keyword id="KW-0227">DNA damage</keyword>
<keyword id="KW-0234">DNA repair</keyword>
<keyword id="KW-0235">DNA replication</keyword>
<keyword id="KW-0436">Ligase</keyword>
<keyword id="KW-0460">Magnesium</keyword>
<keyword id="KW-0464">Manganese</keyword>
<keyword id="KW-0479">Metal-binding</keyword>
<keyword id="KW-0520">NAD</keyword>
<keyword id="KW-0862">Zinc</keyword>
<proteinExistence type="inferred from homology"/>
<protein>
    <recommendedName>
        <fullName evidence="1">DNA ligase</fullName>
        <ecNumber evidence="1">6.5.1.2</ecNumber>
    </recommendedName>
    <alternativeName>
        <fullName evidence="1">Polydeoxyribonucleotide synthase [NAD(+)]</fullName>
    </alternativeName>
</protein>
<dbReference type="EC" id="6.5.1.2" evidence="1"/>
<dbReference type="EMBL" id="CP000514">
    <property type="protein sequence ID" value="ABM18258.1"/>
    <property type="molecule type" value="Genomic_DNA"/>
</dbReference>
<dbReference type="RefSeq" id="WP_011784675.1">
    <property type="nucleotide sequence ID" value="NC_008740.1"/>
</dbReference>
<dbReference type="SMR" id="A1TZT9"/>
<dbReference type="STRING" id="351348.Maqu_1167"/>
<dbReference type="KEGG" id="maq:Maqu_1167"/>
<dbReference type="eggNOG" id="COG0272">
    <property type="taxonomic scope" value="Bacteria"/>
</dbReference>
<dbReference type="HOGENOM" id="CLU_007764_2_1_6"/>
<dbReference type="OrthoDB" id="9759736at2"/>
<dbReference type="Proteomes" id="UP000000998">
    <property type="component" value="Chromosome"/>
</dbReference>
<dbReference type="GO" id="GO:0005829">
    <property type="term" value="C:cytosol"/>
    <property type="evidence" value="ECO:0007669"/>
    <property type="project" value="TreeGrafter"/>
</dbReference>
<dbReference type="GO" id="GO:0003677">
    <property type="term" value="F:DNA binding"/>
    <property type="evidence" value="ECO:0007669"/>
    <property type="project" value="InterPro"/>
</dbReference>
<dbReference type="GO" id="GO:0003911">
    <property type="term" value="F:DNA ligase (NAD+) activity"/>
    <property type="evidence" value="ECO:0007669"/>
    <property type="project" value="UniProtKB-UniRule"/>
</dbReference>
<dbReference type="GO" id="GO:0046872">
    <property type="term" value="F:metal ion binding"/>
    <property type="evidence" value="ECO:0007669"/>
    <property type="project" value="UniProtKB-KW"/>
</dbReference>
<dbReference type="GO" id="GO:0006281">
    <property type="term" value="P:DNA repair"/>
    <property type="evidence" value="ECO:0007669"/>
    <property type="project" value="UniProtKB-KW"/>
</dbReference>
<dbReference type="GO" id="GO:0006260">
    <property type="term" value="P:DNA replication"/>
    <property type="evidence" value="ECO:0007669"/>
    <property type="project" value="UniProtKB-KW"/>
</dbReference>
<dbReference type="CDD" id="cd17748">
    <property type="entry name" value="BRCT_DNA_ligase_like"/>
    <property type="match status" value="1"/>
</dbReference>
<dbReference type="CDD" id="cd00114">
    <property type="entry name" value="LIGANc"/>
    <property type="match status" value="1"/>
</dbReference>
<dbReference type="FunFam" id="1.10.150.20:FF:000006">
    <property type="entry name" value="DNA ligase"/>
    <property type="match status" value="1"/>
</dbReference>
<dbReference type="FunFam" id="1.10.150.20:FF:000007">
    <property type="entry name" value="DNA ligase"/>
    <property type="match status" value="1"/>
</dbReference>
<dbReference type="FunFam" id="1.10.287.610:FF:000002">
    <property type="entry name" value="DNA ligase"/>
    <property type="match status" value="1"/>
</dbReference>
<dbReference type="FunFam" id="2.40.50.140:FF:000012">
    <property type="entry name" value="DNA ligase"/>
    <property type="match status" value="1"/>
</dbReference>
<dbReference type="FunFam" id="3.30.470.30:FF:000001">
    <property type="entry name" value="DNA ligase"/>
    <property type="match status" value="1"/>
</dbReference>
<dbReference type="FunFam" id="3.40.50.10190:FF:000054">
    <property type="entry name" value="DNA ligase"/>
    <property type="match status" value="1"/>
</dbReference>
<dbReference type="Gene3D" id="6.20.10.30">
    <property type="match status" value="1"/>
</dbReference>
<dbReference type="Gene3D" id="1.10.150.20">
    <property type="entry name" value="5' to 3' exonuclease, C-terminal subdomain"/>
    <property type="match status" value="2"/>
</dbReference>
<dbReference type="Gene3D" id="3.40.50.10190">
    <property type="entry name" value="BRCT domain"/>
    <property type="match status" value="1"/>
</dbReference>
<dbReference type="Gene3D" id="3.30.470.30">
    <property type="entry name" value="DNA ligase/mRNA capping enzyme"/>
    <property type="match status" value="1"/>
</dbReference>
<dbReference type="Gene3D" id="1.10.287.610">
    <property type="entry name" value="Helix hairpin bin"/>
    <property type="match status" value="1"/>
</dbReference>
<dbReference type="Gene3D" id="2.40.50.140">
    <property type="entry name" value="Nucleic acid-binding proteins"/>
    <property type="match status" value="1"/>
</dbReference>
<dbReference type="HAMAP" id="MF_01588">
    <property type="entry name" value="DNA_ligase_A"/>
    <property type="match status" value="1"/>
</dbReference>
<dbReference type="InterPro" id="IPR001357">
    <property type="entry name" value="BRCT_dom"/>
</dbReference>
<dbReference type="InterPro" id="IPR036420">
    <property type="entry name" value="BRCT_dom_sf"/>
</dbReference>
<dbReference type="InterPro" id="IPR041663">
    <property type="entry name" value="DisA/LigA_HHH"/>
</dbReference>
<dbReference type="InterPro" id="IPR001679">
    <property type="entry name" value="DNA_ligase"/>
</dbReference>
<dbReference type="InterPro" id="IPR018239">
    <property type="entry name" value="DNA_ligase_AS"/>
</dbReference>
<dbReference type="InterPro" id="IPR033136">
    <property type="entry name" value="DNA_ligase_CS"/>
</dbReference>
<dbReference type="InterPro" id="IPR013839">
    <property type="entry name" value="DNAligase_adenylation"/>
</dbReference>
<dbReference type="InterPro" id="IPR013840">
    <property type="entry name" value="DNAligase_N"/>
</dbReference>
<dbReference type="InterPro" id="IPR003583">
    <property type="entry name" value="Hlx-hairpin-Hlx_DNA-bd_motif"/>
</dbReference>
<dbReference type="InterPro" id="IPR012340">
    <property type="entry name" value="NA-bd_OB-fold"/>
</dbReference>
<dbReference type="InterPro" id="IPR004150">
    <property type="entry name" value="NAD_DNA_ligase_OB"/>
</dbReference>
<dbReference type="InterPro" id="IPR010994">
    <property type="entry name" value="RuvA_2-like"/>
</dbReference>
<dbReference type="InterPro" id="IPR004149">
    <property type="entry name" value="Znf_DNAligase_C4"/>
</dbReference>
<dbReference type="NCBIfam" id="TIGR00575">
    <property type="entry name" value="dnlj"/>
    <property type="match status" value="1"/>
</dbReference>
<dbReference type="NCBIfam" id="NF005932">
    <property type="entry name" value="PRK07956.1"/>
    <property type="match status" value="1"/>
</dbReference>
<dbReference type="PANTHER" id="PTHR23389">
    <property type="entry name" value="CHROMOSOME TRANSMISSION FIDELITY FACTOR 18"/>
    <property type="match status" value="1"/>
</dbReference>
<dbReference type="PANTHER" id="PTHR23389:SF9">
    <property type="entry name" value="DNA LIGASE"/>
    <property type="match status" value="1"/>
</dbReference>
<dbReference type="Pfam" id="PF00533">
    <property type="entry name" value="BRCT"/>
    <property type="match status" value="1"/>
</dbReference>
<dbReference type="Pfam" id="PF01653">
    <property type="entry name" value="DNA_ligase_aden"/>
    <property type="match status" value="1"/>
</dbReference>
<dbReference type="Pfam" id="PF03120">
    <property type="entry name" value="DNA_ligase_OB"/>
    <property type="match status" value="1"/>
</dbReference>
<dbReference type="Pfam" id="PF03119">
    <property type="entry name" value="DNA_ligase_ZBD"/>
    <property type="match status" value="1"/>
</dbReference>
<dbReference type="Pfam" id="PF12826">
    <property type="entry name" value="HHH_2"/>
    <property type="match status" value="1"/>
</dbReference>
<dbReference type="Pfam" id="PF14520">
    <property type="entry name" value="HHH_5"/>
    <property type="match status" value="1"/>
</dbReference>
<dbReference type="Pfam" id="PF22745">
    <property type="entry name" value="Nlig-Ia"/>
    <property type="match status" value="1"/>
</dbReference>
<dbReference type="PIRSF" id="PIRSF001604">
    <property type="entry name" value="LigA"/>
    <property type="match status" value="1"/>
</dbReference>
<dbReference type="SMART" id="SM00292">
    <property type="entry name" value="BRCT"/>
    <property type="match status" value="1"/>
</dbReference>
<dbReference type="SMART" id="SM00278">
    <property type="entry name" value="HhH1"/>
    <property type="match status" value="4"/>
</dbReference>
<dbReference type="SMART" id="SM00532">
    <property type="entry name" value="LIGANc"/>
    <property type="match status" value="1"/>
</dbReference>
<dbReference type="SUPFAM" id="SSF52113">
    <property type="entry name" value="BRCT domain"/>
    <property type="match status" value="1"/>
</dbReference>
<dbReference type="SUPFAM" id="SSF56091">
    <property type="entry name" value="DNA ligase/mRNA capping enzyme, catalytic domain"/>
    <property type="match status" value="1"/>
</dbReference>
<dbReference type="SUPFAM" id="SSF50249">
    <property type="entry name" value="Nucleic acid-binding proteins"/>
    <property type="match status" value="1"/>
</dbReference>
<dbReference type="SUPFAM" id="SSF47781">
    <property type="entry name" value="RuvA domain 2-like"/>
    <property type="match status" value="1"/>
</dbReference>
<dbReference type="PROSITE" id="PS50172">
    <property type="entry name" value="BRCT"/>
    <property type="match status" value="1"/>
</dbReference>
<dbReference type="PROSITE" id="PS01055">
    <property type="entry name" value="DNA_LIGASE_N1"/>
    <property type="match status" value="1"/>
</dbReference>
<dbReference type="PROSITE" id="PS01056">
    <property type="entry name" value="DNA_LIGASE_N2"/>
    <property type="match status" value="1"/>
</dbReference>
<comment type="function">
    <text evidence="1">DNA ligase that catalyzes the formation of phosphodiester linkages between 5'-phosphoryl and 3'-hydroxyl groups in double-stranded DNA using NAD as a coenzyme and as the energy source for the reaction. It is essential for DNA replication and repair of damaged DNA.</text>
</comment>
<comment type="catalytic activity">
    <reaction evidence="1">
        <text>NAD(+) + (deoxyribonucleotide)n-3'-hydroxyl + 5'-phospho-(deoxyribonucleotide)m = (deoxyribonucleotide)n+m + AMP + beta-nicotinamide D-nucleotide.</text>
        <dbReference type="EC" id="6.5.1.2"/>
    </reaction>
</comment>
<comment type="cofactor">
    <cofactor evidence="1">
        <name>Mg(2+)</name>
        <dbReference type="ChEBI" id="CHEBI:18420"/>
    </cofactor>
    <cofactor evidence="1">
        <name>Mn(2+)</name>
        <dbReference type="ChEBI" id="CHEBI:29035"/>
    </cofactor>
</comment>
<comment type="similarity">
    <text evidence="1">Belongs to the NAD-dependent DNA ligase family. LigA subfamily.</text>
</comment>
<accession>A1TZT9</accession>
<reference key="1">
    <citation type="journal article" date="2011" name="Appl. Environ. Microbiol.">
        <title>Genomic potential of Marinobacter aquaeolei, a biogeochemical 'opportunitroph'.</title>
        <authorList>
            <person name="Singer E."/>
            <person name="Webb E.A."/>
            <person name="Nelson W.C."/>
            <person name="Heidelberg J.F."/>
            <person name="Ivanova N."/>
            <person name="Pati A."/>
            <person name="Edwards K.J."/>
        </authorList>
    </citation>
    <scope>NUCLEOTIDE SEQUENCE [LARGE SCALE GENOMIC DNA]</scope>
    <source>
        <strain>ATCC 700491 / DSM 11845 / VT8</strain>
    </source>
</reference>